<accession>O51206</accession>
<evidence type="ECO:0000250" key="1"/>
<evidence type="ECO:0000305" key="2"/>
<evidence type="ECO:0007829" key="3">
    <source>
        <dbReference type="PDB" id="8FN2"/>
    </source>
</evidence>
<proteinExistence type="evidence at protein level"/>
<organism>
    <name type="scientific">Borreliella burgdorferi (strain ATCC 35210 / DSM 4680 / CIP 102532 / B31)</name>
    <name type="common">Borrelia burgdorferi</name>
    <dbReference type="NCBI Taxonomy" id="224326"/>
    <lineage>
        <taxon>Bacteria</taxon>
        <taxon>Pseudomonadati</taxon>
        <taxon>Spirochaetota</taxon>
        <taxon>Spirochaetia</taxon>
        <taxon>Spirochaetales</taxon>
        <taxon>Borreliaceae</taxon>
        <taxon>Borreliella</taxon>
    </lineage>
</organism>
<feature type="chain" id="PRO_0000177125" description="Large ribosomal subunit protein bL20">
    <location>
        <begin position="1"/>
        <end position="115"/>
    </location>
</feature>
<feature type="helix" evidence="3">
    <location>
        <begin position="10"/>
        <end position="20"/>
    </location>
</feature>
<feature type="turn" evidence="3">
    <location>
        <begin position="21"/>
        <end position="23"/>
    </location>
</feature>
<feature type="helix" evidence="3">
    <location>
        <begin position="26"/>
        <end position="29"/>
    </location>
</feature>
<feature type="helix" evidence="3">
    <location>
        <begin position="32"/>
        <end position="68"/>
    </location>
</feature>
<feature type="strand" evidence="3">
    <location>
        <begin position="70"/>
        <end position="73"/>
    </location>
</feature>
<feature type="helix" evidence="3">
    <location>
        <begin position="76"/>
        <end position="85"/>
    </location>
</feature>
<feature type="helix" evidence="3">
    <location>
        <begin position="92"/>
        <end position="101"/>
    </location>
</feature>
<feature type="helix" evidence="3">
    <location>
        <begin position="103"/>
        <end position="114"/>
    </location>
</feature>
<reference key="1">
    <citation type="journal article" date="1997" name="Nature">
        <title>Genomic sequence of a Lyme disease spirochaete, Borrelia burgdorferi.</title>
        <authorList>
            <person name="Fraser C.M."/>
            <person name="Casjens S."/>
            <person name="Huang W.M."/>
            <person name="Sutton G.G."/>
            <person name="Clayton R.A."/>
            <person name="Lathigra R."/>
            <person name="White O."/>
            <person name="Ketchum K.A."/>
            <person name="Dodson R.J."/>
            <person name="Hickey E.K."/>
            <person name="Gwinn M.L."/>
            <person name="Dougherty B.A."/>
            <person name="Tomb J.-F."/>
            <person name="Fleischmann R.D."/>
            <person name="Richardson D.L."/>
            <person name="Peterson J.D."/>
            <person name="Kerlavage A.R."/>
            <person name="Quackenbush J."/>
            <person name="Salzberg S.L."/>
            <person name="Hanson M."/>
            <person name="van Vugt R."/>
            <person name="Palmer N."/>
            <person name="Adams M.D."/>
            <person name="Gocayne J.D."/>
            <person name="Weidman J.F."/>
            <person name="Utterback T.R."/>
            <person name="Watthey L."/>
            <person name="McDonald L.A."/>
            <person name="Artiach P."/>
            <person name="Bowman C."/>
            <person name="Garland S.A."/>
            <person name="Fujii C."/>
            <person name="Cotton M.D."/>
            <person name="Horst K."/>
            <person name="Roberts K.M."/>
            <person name="Hatch B."/>
            <person name="Smith H.O."/>
            <person name="Venter J.C."/>
        </authorList>
    </citation>
    <scope>NUCLEOTIDE SEQUENCE [LARGE SCALE GENOMIC DNA]</scope>
    <source>
        <strain>ATCC 35210 / DSM 4680 / CIP 102532 / B31</strain>
    </source>
</reference>
<sequence length="115" mass="13467">MARAKNGTVHVARRKRILKKTKGFWGTKKSNYKKAKDTLXKGMMYATRDRKVRKRDFRRLWISRISAALSDTGVTYSRFIEGLLKSNIKINRKILSNLAIEDVEAFKKIVLEIRR</sequence>
<keyword id="KW-0002">3D-structure</keyword>
<keyword id="KW-1185">Reference proteome</keyword>
<keyword id="KW-0687">Ribonucleoprotein</keyword>
<keyword id="KW-0689">Ribosomal protein</keyword>
<keyword id="KW-0694">RNA-binding</keyword>
<keyword id="KW-0699">rRNA-binding</keyword>
<comment type="function">
    <text evidence="1">Binds directly to 23S ribosomal RNA and is necessary for the in vitro assembly process of the 50S ribosomal subunit. It is not involved in the protein synthesizing functions of that subunit (By similarity).</text>
</comment>
<comment type="similarity">
    <text evidence="2">Belongs to the bacterial ribosomal protein bL20 family.</text>
</comment>
<dbReference type="EMBL" id="AE000783">
    <property type="status" value="NOT_ANNOTATED_CDS"/>
    <property type="molecule type" value="Genomic_DNA"/>
</dbReference>
<dbReference type="PIR" id="D70123">
    <property type="entry name" value="D70123"/>
</dbReference>
<dbReference type="RefSeq" id="WP_023003280.1">
    <property type="nucleotide sequence ID" value="NC_001318.1"/>
</dbReference>
<dbReference type="RefSeq" id="YP_008686565.1">
    <property type="nucleotide sequence ID" value="NC_001318.1"/>
</dbReference>
<dbReference type="PDB" id="8FMW">
    <property type="method" value="EM"/>
    <property type="resolution" value="2.86 A"/>
    <property type="chains" value="AS=2-115"/>
</dbReference>
<dbReference type="PDB" id="8FN2">
    <property type="method" value="EM"/>
    <property type="resolution" value="3.40 A"/>
    <property type="chains" value="S=2-115"/>
</dbReference>
<dbReference type="PDBsum" id="8FMW"/>
<dbReference type="PDBsum" id="8FN2"/>
<dbReference type="EMDB" id="EMD-29298"/>
<dbReference type="EMDB" id="EMD-29304"/>
<dbReference type="SMR" id="O51206"/>
<dbReference type="PATRIC" id="fig|224326.49.peg.585"/>
<dbReference type="OrthoDB" id="9808966at2"/>
<dbReference type="Proteomes" id="UP000001807">
    <property type="component" value="Chromosome"/>
</dbReference>
<dbReference type="GO" id="GO:1990904">
    <property type="term" value="C:ribonucleoprotein complex"/>
    <property type="evidence" value="ECO:0007669"/>
    <property type="project" value="UniProtKB-KW"/>
</dbReference>
<dbReference type="GO" id="GO:0005840">
    <property type="term" value="C:ribosome"/>
    <property type="evidence" value="ECO:0007669"/>
    <property type="project" value="UniProtKB-KW"/>
</dbReference>
<dbReference type="GO" id="GO:0019843">
    <property type="term" value="F:rRNA binding"/>
    <property type="evidence" value="ECO:0007669"/>
    <property type="project" value="UniProtKB-UniRule"/>
</dbReference>
<dbReference type="GO" id="GO:0003735">
    <property type="term" value="F:structural constituent of ribosome"/>
    <property type="evidence" value="ECO:0007669"/>
    <property type="project" value="InterPro"/>
</dbReference>
<dbReference type="GO" id="GO:0000027">
    <property type="term" value="P:ribosomal large subunit assembly"/>
    <property type="evidence" value="ECO:0007669"/>
    <property type="project" value="UniProtKB-UniRule"/>
</dbReference>
<dbReference type="GO" id="GO:0006412">
    <property type="term" value="P:translation"/>
    <property type="evidence" value="ECO:0007669"/>
    <property type="project" value="InterPro"/>
</dbReference>
<dbReference type="CDD" id="cd07026">
    <property type="entry name" value="Ribosomal_L20"/>
    <property type="match status" value="1"/>
</dbReference>
<dbReference type="FunFam" id="1.10.1900.20:FF:000001">
    <property type="entry name" value="50S ribosomal protein L20"/>
    <property type="match status" value="1"/>
</dbReference>
<dbReference type="Gene3D" id="6.10.160.10">
    <property type="match status" value="1"/>
</dbReference>
<dbReference type="Gene3D" id="1.10.1900.20">
    <property type="entry name" value="Ribosomal protein L20"/>
    <property type="match status" value="1"/>
</dbReference>
<dbReference type="HAMAP" id="MF_00382">
    <property type="entry name" value="Ribosomal_bL20"/>
    <property type="match status" value="1"/>
</dbReference>
<dbReference type="InterPro" id="IPR005813">
    <property type="entry name" value="Ribosomal_bL20"/>
</dbReference>
<dbReference type="InterPro" id="IPR049946">
    <property type="entry name" value="RIBOSOMAL_L20_CS"/>
</dbReference>
<dbReference type="InterPro" id="IPR035566">
    <property type="entry name" value="Ribosomal_protein_bL20_C"/>
</dbReference>
<dbReference type="NCBIfam" id="TIGR01032">
    <property type="entry name" value="rplT_bact"/>
    <property type="match status" value="1"/>
</dbReference>
<dbReference type="PANTHER" id="PTHR10986">
    <property type="entry name" value="39S RIBOSOMAL PROTEIN L20"/>
    <property type="match status" value="1"/>
</dbReference>
<dbReference type="Pfam" id="PF00453">
    <property type="entry name" value="Ribosomal_L20"/>
    <property type="match status" value="1"/>
</dbReference>
<dbReference type="PRINTS" id="PR00062">
    <property type="entry name" value="RIBOSOMALL20"/>
</dbReference>
<dbReference type="SUPFAM" id="SSF74731">
    <property type="entry name" value="Ribosomal protein L20"/>
    <property type="match status" value="1"/>
</dbReference>
<dbReference type="PROSITE" id="PS00937">
    <property type="entry name" value="RIBOSOMAL_L20"/>
    <property type="match status" value="1"/>
</dbReference>
<protein>
    <recommendedName>
        <fullName evidence="2">Large ribosomal subunit protein bL20</fullName>
    </recommendedName>
    <alternativeName>
        <fullName>50S ribosomal protein L20</fullName>
    </alternativeName>
</protein>
<name>RL20_BORBU</name>
<gene>
    <name type="primary">rplT</name>
    <name type="ordered locus">BB_0188</name>
</gene>